<organism>
    <name type="scientific">Burkholderia cenocepacia (strain HI2424)</name>
    <dbReference type="NCBI Taxonomy" id="331272"/>
    <lineage>
        <taxon>Bacteria</taxon>
        <taxon>Pseudomonadati</taxon>
        <taxon>Pseudomonadota</taxon>
        <taxon>Betaproteobacteria</taxon>
        <taxon>Burkholderiales</taxon>
        <taxon>Burkholderiaceae</taxon>
        <taxon>Burkholderia</taxon>
        <taxon>Burkholderia cepacia complex</taxon>
    </lineage>
</organism>
<dbReference type="EC" id="6.1.1.21" evidence="1"/>
<dbReference type="EMBL" id="CP000458">
    <property type="protein sequence ID" value="ABK08562.1"/>
    <property type="molecule type" value="Genomic_DNA"/>
</dbReference>
<dbReference type="RefSeq" id="WP_011549689.1">
    <property type="nucleotide sequence ID" value="NC_008542.1"/>
</dbReference>
<dbReference type="SMR" id="A0K7T5"/>
<dbReference type="KEGG" id="bch:Bcen2424_1811"/>
<dbReference type="HOGENOM" id="CLU_025113_1_1_4"/>
<dbReference type="GO" id="GO:0005737">
    <property type="term" value="C:cytoplasm"/>
    <property type="evidence" value="ECO:0007669"/>
    <property type="project" value="UniProtKB-SubCell"/>
</dbReference>
<dbReference type="GO" id="GO:0005524">
    <property type="term" value="F:ATP binding"/>
    <property type="evidence" value="ECO:0007669"/>
    <property type="project" value="UniProtKB-UniRule"/>
</dbReference>
<dbReference type="GO" id="GO:0004821">
    <property type="term" value="F:histidine-tRNA ligase activity"/>
    <property type="evidence" value="ECO:0007669"/>
    <property type="project" value="UniProtKB-UniRule"/>
</dbReference>
<dbReference type="GO" id="GO:0006427">
    <property type="term" value="P:histidyl-tRNA aminoacylation"/>
    <property type="evidence" value="ECO:0007669"/>
    <property type="project" value="UniProtKB-UniRule"/>
</dbReference>
<dbReference type="CDD" id="cd00773">
    <property type="entry name" value="HisRS-like_core"/>
    <property type="match status" value="1"/>
</dbReference>
<dbReference type="CDD" id="cd00859">
    <property type="entry name" value="HisRS_anticodon"/>
    <property type="match status" value="1"/>
</dbReference>
<dbReference type="FunFam" id="3.30.930.10:FF:000005">
    <property type="entry name" value="Histidine--tRNA ligase"/>
    <property type="match status" value="1"/>
</dbReference>
<dbReference type="Gene3D" id="3.40.50.800">
    <property type="entry name" value="Anticodon-binding domain"/>
    <property type="match status" value="1"/>
</dbReference>
<dbReference type="Gene3D" id="3.30.930.10">
    <property type="entry name" value="Bira Bifunctional Protein, Domain 2"/>
    <property type="match status" value="1"/>
</dbReference>
<dbReference type="HAMAP" id="MF_00127">
    <property type="entry name" value="His_tRNA_synth"/>
    <property type="match status" value="1"/>
</dbReference>
<dbReference type="InterPro" id="IPR006195">
    <property type="entry name" value="aa-tRNA-synth_II"/>
</dbReference>
<dbReference type="InterPro" id="IPR045864">
    <property type="entry name" value="aa-tRNA-synth_II/BPL/LPL"/>
</dbReference>
<dbReference type="InterPro" id="IPR004154">
    <property type="entry name" value="Anticodon-bd"/>
</dbReference>
<dbReference type="InterPro" id="IPR036621">
    <property type="entry name" value="Anticodon-bd_dom_sf"/>
</dbReference>
<dbReference type="InterPro" id="IPR015807">
    <property type="entry name" value="His-tRNA-ligase"/>
</dbReference>
<dbReference type="InterPro" id="IPR041715">
    <property type="entry name" value="HisRS-like_core"/>
</dbReference>
<dbReference type="InterPro" id="IPR004516">
    <property type="entry name" value="HisRS/HisZ"/>
</dbReference>
<dbReference type="InterPro" id="IPR033656">
    <property type="entry name" value="HisRS_anticodon"/>
</dbReference>
<dbReference type="NCBIfam" id="TIGR00442">
    <property type="entry name" value="hisS"/>
    <property type="match status" value="1"/>
</dbReference>
<dbReference type="PANTHER" id="PTHR43707:SF1">
    <property type="entry name" value="HISTIDINE--TRNA LIGASE, MITOCHONDRIAL-RELATED"/>
    <property type="match status" value="1"/>
</dbReference>
<dbReference type="PANTHER" id="PTHR43707">
    <property type="entry name" value="HISTIDYL-TRNA SYNTHETASE"/>
    <property type="match status" value="1"/>
</dbReference>
<dbReference type="Pfam" id="PF03129">
    <property type="entry name" value="HGTP_anticodon"/>
    <property type="match status" value="1"/>
</dbReference>
<dbReference type="Pfam" id="PF13393">
    <property type="entry name" value="tRNA-synt_His"/>
    <property type="match status" value="1"/>
</dbReference>
<dbReference type="PIRSF" id="PIRSF001549">
    <property type="entry name" value="His-tRNA_synth"/>
    <property type="match status" value="1"/>
</dbReference>
<dbReference type="SUPFAM" id="SSF52954">
    <property type="entry name" value="Class II aaRS ABD-related"/>
    <property type="match status" value="1"/>
</dbReference>
<dbReference type="SUPFAM" id="SSF55681">
    <property type="entry name" value="Class II aaRS and biotin synthetases"/>
    <property type="match status" value="1"/>
</dbReference>
<dbReference type="PROSITE" id="PS50862">
    <property type="entry name" value="AA_TRNA_LIGASE_II"/>
    <property type="match status" value="1"/>
</dbReference>
<evidence type="ECO:0000255" key="1">
    <source>
        <dbReference type="HAMAP-Rule" id="MF_00127"/>
    </source>
</evidence>
<keyword id="KW-0030">Aminoacyl-tRNA synthetase</keyword>
<keyword id="KW-0067">ATP-binding</keyword>
<keyword id="KW-0963">Cytoplasm</keyword>
<keyword id="KW-0436">Ligase</keyword>
<keyword id="KW-0547">Nucleotide-binding</keyword>
<keyword id="KW-0648">Protein biosynthesis</keyword>
<proteinExistence type="inferred from homology"/>
<accession>A0K7T5</accession>
<feature type="chain" id="PRO_1000016320" description="Histidine--tRNA ligase">
    <location>
        <begin position="1"/>
        <end position="446"/>
    </location>
</feature>
<sequence length="446" mass="49585">MTEQKRKIEKLTGVKGMNDILPQDAGLWEFFEATVKSLLRAYGYQNIRTPIVEHTQLFTRGIGEVTDIVEKEMYSFTDALNGENLTMRPENTAAVVRASIEHNMLYDGPKRLWYIGPMFRHERPQRGRYRQFHQVGVEALGFAGPDADAEIIMMCQRLWDDLGLTGIKLEINSLGLAEERAAHRVELIKYLEQFADVLDEDAKRRLYTNPLRVLDTKNPALQDIAQNAPKLIDFLGDESRAHFEGLQRLLLANNIPFKINPRLVRGLDYYNLTVFEWVTDKLGAQGTVAAGGRYDPLIEQLGGKPTAACGWAMGIERILELLKEEDLAPEQEGVDVYVVHQGDTAREQAFIAAERLRDTGLDVIFHCSADGAPASFKSQMKRADASGAAFAVIFGEEEVANGTVGVKALRGAGAEGEKNVQQTVPVESLTEFLINAMVASAEDGDD</sequence>
<name>SYH_BURCH</name>
<comment type="catalytic activity">
    <reaction evidence="1">
        <text>tRNA(His) + L-histidine + ATP = L-histidyl-tRNA(His) + AMP + diphosphate + H(+)</text>
        <dbReference type="Rhea" id="RHEA:17313"/>
        <dbReference type="Rhea" id="RHEA-COMP:9665"/>
        <dbReference type="Rhea" id="RHEA-COMP:9689"/>
        <dbReference type="ChEBI" id="CHEBI:15378"/>
        <dbReference type="ChEBI" id="CHEBI:30616"/>
        <dbReference type="ChEBI" id="CHEBI:33019"/>
        <dbReference type="ChEBI" id="CHEBI:57595"/>
        <dbReference type="ChEBI" id="CHEBI:78442"/>
        <dbReference type="ChEBI" id="CHEBI:78527"/>
        <dbReference type="ChEBI" id="CHEBI:456215"/>
        <dbReference type="EC" id="6.1.1.21"/>
    </reaction>
</comment>
<comment type="subunit">
    <text evidence="1">Homodimer.</text>
</comment>
<comment type="subcellular location">
    <subcellularLocation>
        <location evidence="1">Cytoplasm</location>
    </subcellularLocation>
</comment>
<comment type="similarity">
    <text evidence="1">Belongs to the class-II aminoacyl-tRNA synthetase family.</text>
</comment>
<reference key="1">
    <citation type="submission" date="2006-08" db="EMBL/GenBank/DDBJ databases">
        <title>Complete sequence of chromosome 1 of Burkholderia cenocepacia HI2424.</title>
        <authorList>
            <person name="Copeland A."/>
            <person name="Lucas S."/>
            <person name="Lapidus A."/>
            <person name="Barry K."/>
            <person name="Detter J.C."/>
            <person name="Glavina del Rio T."/>
            <person name="Hammon N."/>
            <person name="Israni S."/>
            <person name="Pitluck S."/>
            <person name="Chain P."/>
            <person name="Malfatti S."/>
            <person name="Shin M."/>
            <person name="Vergez L."/>
            <person name="Schmutz J."/>
            <person name="Larimer F."/>
            <person name="Land M."/>
            <person name="Hauser L."/>
            <person name="Kyrpides N."/>
            <person name="Kim E."/>
            <person name="LiPuma J.J."/>
            <person name="Gonzalez C.F."/>
            <person name="Konstantinidis K."/>
            <person name="Tiedje J.M."/>
            <person name="Richardson P."/>
        </authorList>
    </citation>
    <scope>NUCLEOTIDE SEQUENCE [LARGE SCALE GENOMIC DNA]</scope>
    <source>
        <strain>HI2424</strain>
    </source>
</reference>
<gene>
    <name evidence="1" type="primary">hisS</name>
    <name type="ordered locus">Bcen2424_1811</name>
</gene>
<protein>
    <recommendedName>
        <fullName evidence="1">Histidine--tRNA ligase</fullName>
        <ecNumber evidence="1">6.1.1.21</ecNumber>
    </recommendedName>
    <alternativeName>
        <fullName evidence="1">Histidyl-tRNA synthetase</fullName>
        <shortName evidence="1">HisRS</shortName>
    </alternativeName>
</protein>